<organism>
    <name type="scientific">Clostridium perfringens (strain 13 / Type A)</name>
    <dbReference type="NCBI Taxonomy" id="195102"/>
    <lineage>
        <taxon>Bacteria</taxon>
        <taxon>Bacillati</taxon>
        <taxon>Bacillota</taxon>
        <taxon>Clostridia</taxon>
        <taxon>Eubacteriales</taxon>
        <taxon>Clostridiaceae</taxon>
        <taxon>Clostridium</taxon>
    </lineage>
</organism>
<feature type="chain" id="PRO_0000381321" description="Biotin synthase">
    <location>
        <begin position="1"/>
        <end position="319"/>
    </location>
</feature>
<feature type="domain" description="Radical SAM core" evidence="2">
    <location>
        <begin position="44"/>
        <end position="273"/>
    </location>
</feature>
<feature type="binding site" evidence="1">
    <location>
        <position position="62"/>
    </location>
    <ligand>
        <name>[4Fe-4S] cluster</name>
        <dbReference type="ChEBI" id="CHEBI:49883"/>
        <note>4Fe-4S-S-AdoMet</note>
    </ligand>
</feature>
<feature type="binding site" evidence="1">
    <location>
        <position position="66"/>
    </location>
    <ligand>
        <name>[4Fe-4S] cluster</name>
        <dbReference type="ChEBI" id="CHEBI:49883"/>
        <note>4Fe-4S-S-AdoMet</note>
    </ligand>
</feature>
<feature type="binding site" evidence="1">
    <location>
        <position position="69"/>
    </location>
    <ligand>
        <name>[4Fe-4S] cluster</name>
        <dbReference type="ChEBI" id="CHEBI:49883"/>
        <note>4Fe-4S-S-AdoMet</note>
    </ligand>
</feature>
<feature type="binding site" evidence="1">
    <location>
        <position position="106"/>
    </location>
    <ligand>
        <name>[2Fe-2S] cluster</name>
        <dbReference type="ChEBI" id="CHEBI:190135"/>
    </ligand>
</feature>
<feature type="binding site" evidence="1">
    <location>
        <position position="138"/>
    </location>
    <ligand>
        <name>[2Fe-2S] cluster</name>
        <dbReference type="ChEBI" id="CHEBI:190135"/>
    </ligand>
</feature>
<feature type="binding site" evidence="1">
    <location>
        <position position="198"/>
    </location>
    <ligand>
        <name>[2Fe-2S] cluster</name>
        <dbReference type="ChEBI" id="CHEBI:190135"/>
    </ligand>
</feature>
<feature type="binding site" evidence="1">
    <location>
        <position position="268"/>
    </location>
    <ligand>
        <name>[2Fe-2S] cluster</name>
        <dbReference type="ChEBI" id="CHEBI:190135"/>
    </ligand>
</feature>
<dbReference type="EC" id="2.8.1.6" evidence="1"/>
<dbReference type="EMBL" id="BA000016">
    <property type="protein sequence ID" value="BAB81250.1"/>
    <property type="molecule type" value="Genomic_DNA"/>
</dbReference>
<dbReference type="RefSeq" id="WP_011010500.1">
    <property type="nucleotide sequence ID" value="NC_003366.1"/>
</dbReference>
<dbReference type="SMR" id="Q8XK59"/>
<dbReference type="STRING" id="195102.gene:10490808"/>
<dbReference type="KEGG" id="cpe:CPE1544"/>
<dbReference type="HOGENOM" id="CLU_033172_2_1_9"/>
<dbReference type="UniPathway" id="UPA00078">
    <property type="reaction ID" value="UER00162"/>
</dbReference>
<dbReference type="Proteomes" id="UP000000818">
    <property type="component" value="Chromosome"/>
</dbReference>
<dbReference type="GO" id="GO:0051537">
    <property type="term" value="F:2 iron, 2 sulfur cluster binding"/>
    <property type="evidence" value="ECO:0007669"/>
    <property type="project" value="UniProtKB-KW"/>
</dbReference>
<dbReference type="GO" id="GO:0051539">
    <property type="term" value="F:4 iron, 4 sulfur cluster binding"/>
    <property type="evidence" value="ECO:0007669"/>
    <property type="project" value="UniProtKB-KW"/>
</dbReference>
<dbReference type="GO" id="GO:0004076">
    <property type="term" value="F:biotin synthase activity"/>
    <property type="evidence" value="ECO:0007669"/>
    <property type="project" value="UniProtKB-UniRule"/>
</dbReference>
<dbReference type="GO" id="GO:0005506">
    <property type="term" value="F:iron ion binding"/>
    <property type="evidence" value="ECO:0007669"/>
    <property type="project" value="UniProtKB-UniRule"/>
</dbReference>
<dbReference type="GO" id="GO:0009102">
    <property type="term" value="P:biotin biosynthetic process"/>
    <property type="evidence" value="ECO:0007669"/>
    <property type="project" value="UniProtKB-UniRule"/>
</dbReference>
<dbReference type="CDD" id="cd01335">
    <property type="entry name" value="Radical_SAM"/>
    <property type="match status" value="1"/>
</dbReference>
<dbReference type="FunFam" id="3.20.20.70:FF:000026">
    <property type="entry name" value="Biotin synthase"/>
    <property type="match status" value="1"/>
</dbReference>
<dbReference type="Gene3D" id="3.20.20.70">
    <property type="entry name" value="Aldolase class I"/>
    <property type="match status" value="1"/>
</dbReference>
<dbReference type="HAMAP" id="MF_01694">
    <property type="entry name" value="BioB"/>
    <property type="match status" value="1"/>
</dbReference>
<dbReference type="InterPro" id="IPR013785">
    <property type="entry name" value="Aldolase_TIM"/>
</dbReference>
<dbReference type="InterPro" id="IPR010722">
    <property type="entry name" value="BATS_dom"/>
</dbReference>
<dbReference type="InterPro" id="IPR002684">
    <property type="entry name" value="Biotin_synth/BioAB"/>
</dbReference>
<dbReference type="InterPro" id="IPR024177">
    <property type="entry name" value="Biotin_synthase"/>
</dbReference>
<dbReference type="InterPro" id="IPR006638">
    <property type="entry name" value="Elp3/MiaA/NifB-like_rSAM"/>
</dbReference>
<dbReference type="InterPro" id="IPR007197">
    <property type="entry name" value="rSAM"/>
</dbReference>
<dbReference type="NCBIfam" id="TIGR00433">
    <property type="entry name" value="bioB"/>
    <property type="match status" value="1"/>
</dbReference>
<dbReference type="PANTHER" id="PTHR22976">
    <property type="entry name" value="BIOTIN SYNTHASE"/>
    <property type="match status" value="1"/>
</dbReference>
<dbReference type="PANTHER" id="PTHR22976:SF2">
    <property type="entry name" value="BIOTIN SYNTHASE, MITOCHONDRIAL"/>
    <property type="match status" value="1"/>
</dbReference>
<dbReference type="Pfam" id="PF06968">
    <property type="entry name" value="BATS"/>
    <property type="match status" value="1"/>
</dbReference>
<dbReference type="Pfam" id="PF04055">
    <property type="entry name" value="Radical_SAM"/>
    <property type="match status" value="1"/>
</dbReference>
<dbReference type="PIRSF" id="PIRSF001619">
    <property type="entry name" value="Biotin_synth"/>
    <property type="match status" value="1"/>
</dbReference>
<dbReference type="SFLD" id="SFLDG01060">
    <property type="entry name" value="BATS_domain_containing"/>
    <property type="match status" value="1"/>
</dbReference>
<dbReference type="SFLD" id="SFLDG01278">
    <property type="entry name" value="biotin_synthase_like"/>
    <property type="match status" value="1"/>
</dbReference>
<dbReference type="SMART" id="SM00876">
    <property type="entry name" value="BATS"/>
    <property type="match status" value="1"/>
</dbReference>
<dbReference type="SMART" id="SM00729">
    <property type="entry name" value="Elp3"/>
    <property type="match status" value="1"/>
</dbReference>
<dbReference type="SUPFAM" id="SSF102114">
    <property type="entry name" value="Radical SAM enzymes"/>
    <property type="match status" value="1"/>
</dbReference>
<dbReference type="PROSITE" id="PS51918">
    <property type="entry name" value="RADICAL_SAM"/>
    <property type="match status" value="1"/>
</dbReference>
<name>BIOB_CLOPE</name>
<proteinExistence type="inferred from homology"/>
<accession>Q8XK59</accession>
<sequence>MDFILKMKDKSLKNIKLTREEGLRLFNSNLEELIKEANNIRKEIHGDGIDLCSIINGKSGRCGEDCAFCAQSKYHKTNISEYPLLDYEKIKKVAKENEDEGVHRFSIVTSGRGLYGEEFERVITYYSNLNKELKINLCASHGIINKESLIKLKKAGVKRYHHNLETSRNYYDKICKTHSYEERVKTIKNAKEAGLEVCSGGIIGLGETILDRIDLAITLRELEIKSIPINVLSAIKGTKLQNMIPLNEEEILRTIAVFRFINPEAKIRLAGGRYLLKNFGENAFKAGANATITGNLLTTCGNKIKDDKRLIENIGMRIF</sequence>
<keyword id="KW-0001">2Fe-2S</keyword>
<keyword id="KW-0004">4Fe-4S</keyword>
<keyword id="KW-0093">Biotin biosynthesis</keyword>
<keyword id="KW-0408">Iron</keyword>
<keyword id="KW-0411">Iron-sulfur</keyword>
<keyword id="KW-0479">Metal-binding</keyword>
<keyword id="KW-1185">Reference proteome</keyword>
<keyword id="KW-0949">S-adenosyl-L-methionine</keyword>
<keyword id="KW-0808">Transferase</keyword>
<evidence type="ECO:0000255" key="1">
    <source>
        <dbReference type="HAMAP-Rule" id="MF_01694"/>
    </source>
</evidence>
<evidence type="ECO:0000255" key="2">
    <source>
        <dbReference type="PROSITE-ProRule" id="PRU01266"/>
    </source>
</evidence>
<comment type="function">
    <text evidence="1">Catalyzes the conversion of dethiobiotin (DTB) to biotin by the insertion of a sulfur atom into dethiobiotin via a radical-based mechanism.</text>
</comment>
<comment type="catalytic activity">
    <reaction evidence="1">
        <text>(4R,5S)-dethiobiotin + (sulfur carrier)-SH + 2 reduced [2Fe-2S]-[ferredoxin] + 2 S-adenosyl-L-methionine = (sulfur carrier)-H + biotin + 2 5'-deoxyadenosine + 2 L-methionine + 2 oxidized [2Fe-2S]-[ferredoxin]</text>
        <dbReference type="Rhea" id="RHEA:22060"/>
        <dbReference type="Rhea" id="RHEA-COMP:10000"/>
        <dbReference type="Rhea" id="RHEA-COMP:10001"/>
        <dbReference type="Rhea" id="RHEA-COMP:14737"/>
        <dbReference type="Rhea" id="RHEA-COMP:14739"/>
        <dbReference type="ChEBI" id="CHEBI:17319"/>
        <dbReference type="ChEBI" id="CHEBI:29917"/>
        <dbReference type="ChEBI" id="CHEBI:33737"/>
        <dbReference type="ChEBI" id="CHEBI:33738"/>
        <dbReference type="ChEBI" id="CHEBI:57586"/>
        <dbReference type="ChEBI" id="CHEBI:57844"/>
        <dbReference type="ChEBI" id="CHEBI:59789"/>
        <dbReference type="ChEBI" id="CHEBI:64428"/>
        <dbReference type="ChEBI" id="CHEBI:149473"/>
        <dbReference type="EC" id="2.8.1.6"/>
    </reaction>
</comment>
<comment type="cofactor">
    <cofactor evidence="1">
        <name>[4Fe-4S] cluster</name>
        <dbReference type="ChEBI" id="CHEBI:49883"/>
    </cofactor>
    <text evidence="1">Binds 1 [4Fe-4S] cluster. The cluster is coordinated with 3 cysteines and an exchangeable S-adenosyl-L-methionine.</text>
</comment>
<comment type="cofactor">
    <cofactor evidence="1">
        <name>[2Fe-2S] cluster</name>
        <dbReference type="ChEBI" id="CHEBI:190135"/>
    </cofactor>
    <text evidence="1">Binds 1 [2Fe-2S] cluster. The cluster is coordinated with 3 cysteines and 1 arginine.</text>
</comment>
<comment type="pathway">
    <text evidence="1">Cofactor biosynthesis; biotin biosynthesis; biotin from 7,8-diaminononanoate: step 2/2.</text>
</comment>
<comment type="subunit">
    <text evidence="1">Homodimer.</text>
</comment>
<comment type="similarity">
    <text evidence="1">Belongs to the radical SAM superfamily. Biotin synthase family.</text>
</comment>
<gene>
    <name evidence="1" type="primary">bioB</name>
    <name type="ordered locus">CPE1544</name>
</gene>
<reference key="1">
    <citation type="journal article" date="2002" name="Proc. Natl. Acad. Sci. U.S.A.">
        <title>Complete genome sequence of Clostridium perfringens, an anaerobic flesh-eater.</title>
        <authorList>
            <person name="Shimizu T."/>
            <person name="Ohtani K."/>
            <person name="Hirakawa H."/>
            <person name="Ohshima K."/>
            <person name="Yamashita A."/>
            <person name="Shiba T."/>
            <person name="Ogasawara N."/>
            <person name="Hattori M."/>
            <person name="Kuhara S."/>
            <person name="Hayashi H."/>
        </authorList>
    </citation>
    <scope>NUCLEOTIDE SEQUENCE [LARGE SCALE GENOMIC DNA]</scope>
    <source>
        <strain>13 / Type A</strain>
    </source>
</reference>
<protein>
    <recommendedName>
        <fullName evidence="1">Biotin synthase</fullName>
        <ecNumber evidence="1">2.8.1.6</ecNumber>
    </recommendedName>
</protein>